<organism>
    <name type="scientific">Rickettsia felis (strain ATCC VR-1525 / URRWXCal2)</name>
    <name type="common">Rickettsia azadi</name>
    <dbReference type="NCBI Taxonomy" id="315456"/>
    <lineage>
        <taxon>Bacteria</taxon>
        <taxon>Pseudomonadati</taxon>
        <taxon>Pseudomonadota</taxon>
        <taxon>Alphaproteobacteria</taxon>
        <taxon>Rickettsiales</taxon>
        <taxon>Rickettsiaceae</taxon>
        <taxon>Rickettsieae</taxon>
        <taxon>Rickettsia</taxon>
        <taxon>spotted fever group</taxon>
    </lineage>
</organism>
<name>RPOB_RICFE</name>
<proteinExistence type="inferred from homology"/>
<accession>Q4UKD4</accession>
<comment type="function">
    <text evidence="1">DNA-dependent RNA polymerase catalyzes the transcription of DNA into RNA using the four ribonucleoside triphosphates as substrates.</text>
</comment>
<comment type="catalytic activity">
    <reaction evidence="1">
        <text>RNA(n) + a ribonucleoside 5'-triphosphate = RNA(n+1) + diphosphate</text>
        <dbReference type="Rhea" id="RHEA:21248"/>
        <dbReference type="Rhea" id="RHEA-COMP:14527"/>
        <dbReference type="Rhea" id="RHEA-COMP:17342"/>
        <dbReference type="ChEBI" id="CHEBI:33019"/>
        <dbReference type="ChEBI" id="CHEBI:61557"/>
        <dbReference type="ChEBI" id="CHEBI:140395"/>
        <dbReference type="EC" id="2.7.7.6"/>
    </reaction>
</comment>
<comment type="subunit">
    <text evidence="1">The RNAP catalytic core consists of 2 alpha, 1 beta, 1 beta' and 1 omega subunit. When a sigma factor is associated with the core the holoenzyme is formed, which can initiate transcription.</text>
</comment>
<comment type="similarity">
    <text evidence="1">Belongs to the RNA polymerase beta chain family.</text>
</comment>
<keyword id="KW-0240">DNA-directed RNA polymerase</keyword>
<keyword id="KW-0548">Nucleotidyltransferase</keyword>
<keyword id="KW-0804">Transcription</keyword>
<keyword id="KW-0808">Transferase</keyword>
<gene>
    <name evidence="1" type="primary">rpoB</name>
    <name type="ordered locus">RF_1146</name>
</gene>
<feature type="chain" id="PRO_0000224102" description="DNA-directed RNA polymerase subunit beta">
    <location>
        <begin position="1"/>
        <end position="1373"/>
    </location>
</feature>
<protein>
    <recommendedName>
        <fullName evidence="1">DNA-directed RNA polymerase subunit beta</fullName>
        <shortName evidence="1">RNAP subunit beta</shortName>
        <ecNumber evidence="1">2.7.7.6</ecNumber>
    </recommendedName>
    <alternativeName>
        <fullName evidence="1">RNA polymerase subunit beta</fullName>
    </alternativeName>
    <alternativeName>
        <fullName evidence="1">Transcriptase subunit beta</fullName>
    </alternativeName>
</protein>
<dbReference type="EC" id="2.7.7.6" evidence="1"/>
<dbReference type="EMBL" id="CP000053">
    <property type="protein sequence ID" value="AAY61997.1"/>
    <property type="molecule type" value="Genomic_DNA"/>
</dbReference>
<dbReference type="SMR" id="Q4UKD4"/>
<dbReference type="STRING" id="315456.RF_1146"/>
<dbReference type="KEGG" id="rfe:RF_1146"/>
<dbReference type="eggNOG" id="COG0085">
    <property type="taxonomic scope" value="Bacteria"/>
</dbReference>
<dbReference type="HOGENOM" id="CLU_000524_4_3_5"/>
<dbReference type="OrthoDB" id="9803954at2"/>
<dbReference type="Proteomes" id="UP000008548">
    <property type="component" value="Chromosome"/>
</dbReference>
<dbReference type="GO" id="GO:0000428">
    <property type="term" value="C:DNA-directed RNA polymerase complex"/>
    <property type="evidence" value="ECO:0007669"/>
    <property type="project" value="UniProtKB-KW"/>
</dbReference>
<dbReference type="GO" id="GO:0003677">
    <property type="term" value="F:DNA binding"/>
    <property type="evidence" value="ECO:0007669"/>
    <property type="project" value="UniProtKB-UniRule"/>
</dbReference>
<dbReference type="GO" id="GO:0003899">
    <property type="term" value="F:DNA-directed RNA polymerase activity"/>
    <property type="evidence" value="ECO:0007669"/>
    <property type="project" value="UniProtKB-UniRule"/>
</dbReference>
<dbReference type="GO" id="GO:0032549">
    <property type="term" value="F:ribonucleoside binding"/>
    <property type="evidence" value="ECO:0007669"/>
    <property type="project" value="InterPro"/>
</dbReference>
<dbReference type="GO" id="GO:0006351">
    <property type="term" value="P:DNA-templated transcription"/>
    <property type="evidence" value="ECO:0007669"/>
    <property type="project" value="UniProtKB-UniRule"/>
</dbReference>
<dbReference type="CDD" id="cd00653">
    <property type="entry name" value="RNA_pol_B_RPB2"/>
    <property type="match status" value="1"/>
</dbReference>
<dbReference type="Gene3D" id="2.40.50.100">
    <property type="match status" value="1"/>
</dbReference>
<dbReference type="Gene3D" id="2.40.50.150">
    <property type="match status" value="1"/>
</dbReference>
<dbReference type="Gene3D" id="3.90.1100.10">
    <property type="match status" value="2"/>
</dbReference>
<dbReference type="Gene3D" id="2.30.150.10">
    <property type="entry name" value="DNA-directed RNA polymerase, beta subunit, external 1 domain"/>
    <property type="match status" value="1"/>
</dbReference>
<dbReference type="Gene3D" id="2.40.270.10">
    <property type="entry name" value="DNA-directed RNA polymerase, subunit 2, domain 6"/>
    <property type="match status" value="2"/>
</dbReference>
<dbReference type="Gene3D" id="3.90.1800.10">
    <property type="entry name" value="RNA polymerase alpha subunit dimerisation domain"/>
    <property type="match status" value="1"/>
</dbReference>
<dbReference type="Gene3D" id="3.90.1110.10">
    <property type="entry name" value="RNA polymerase Rpb2, domain 2"/>
    <property type="match status" value="2"/>
</dbReference>
<dbReference type="HAMAP" id="MF_01321">
    <property type="entry name" value="RNApol_bact_RpoB"/>
    <property type="match status" value="1"/>
</dbReference>
<dbReference type="InterPro" id="IPR042107">
    <property type="entry name" value="DNA-dir_RNA_pol_bsu_ext_1_sf"/>
</dbReference>
<dbReference type="InterPro" id="IPR019462">
    <property type="entry name" value="DNA-dir_RNA_pol_bsu_external_1"/>
</dbReference>
<dbReference type="InterPro" id="IPR015712">
    <property type="entry name" value="DNA-dir_RNA_pol_su2"/>
</dbReference>
<dbReference type="InterPro" id="IPR007120">
    <property type="entry name" value="DNA-dir_RNAP_su2_dom"/>
</dbReference>
<dbReference type="InterPro" id="IPR037033">
    <property type="entry name" value="DNA-dir_RNAP_su2_hyb_sf"/>
</dbReference>
<dbReference type="InterPro" id="IPR010243">
    <property type="entry name" value="RNA_pol_bsu_bac"/>
</dbReference>
<dbReference type="InterPro" id="IPR007121">
    <property type="entry name" value="RNA_pol_bsu_CS"/>
</dbReference>
<dbReference type="InterPro" id="IPR007644">
    <property type="entry name" value="RNA_pol_bsu_protrusion"/>
</dbReference>
<dbReference type="InterPro" id="IPR007642">
    <property type="entry name" value="RNA_pol_Rpb2_2"/>
</dbReference>
<dbReference type="InterPro" id="IPR037034">
    <property type="entry name" value="RNA_pol_Rpb2_2_sf"/>
</dbReference>
<dbReference type="InterPro" id="IPR007645">
    <property type="entry name" value="RNA_pol_Rpb2_3"/>
</dbReference>
<dbReference type="InterPro" id="IPR007641">
    <property type="entry name" value="RNA_pol_Rpb2_7"/>
</dbReference>
<dbReference type="InterPro" id="IPR014724">
    <property type="entry name" value="RNA_pol_RPB2_OB-fold"/>
</dbReference>
<dbReference type="NCBIfam" id="NF001616">
    <property type="entry name" value="PRK00405.1"/>
    <property type="match status" value="1"/>
</dbReference>
<dbReference type="NCBIfam" id="TIGR02013">
    <property type="entry name" value="rpoB"/>
    <property type="match status" value="1"/>
</dbReference>
<dbReference type="PANTHER" id="PTHR20856">
    <property type="entry name" value="DNA-DIRECTED RNA POLYMERASE I SUBUNIT 2"/>
    <property type="match status" value="1"/>
</dbReference>
<dbReference type="Pfam" id="PF04563">
    <property type="entry name" value="RNA_pol_Rpb2_1"/>
    <property type="match status" value="1"/>
</dbReference>
<dbReference type="Pfam" id="PF04561">
    <property type="entry name" value="RNA_pol_Rpb2_2"/>
    <property type="match status" value="1"/>
</dbReference>
<dbReference type="Pfam" id="PF04565">
    <property type="entry name" value="RNA_pol_Rpb2_3"/>
    <property type="match status" value="1"/>
</dbReference>
<dbReference type="Pfam" id="PF10385">
    <property type="entry name" value="RNA_pol_Rpb2_45"/>
    <property type="match status" value="1"/>
</dbReference>
<dbReference type="Pfam" id="PF00562">
    <property type="entry name" value="RNA_pol_Rpb2_6"/>
    <property type="match status" value="1"/>
</dbReference>
<dbReference type="Pfam" id="PF04560">
    <property type="entry name" value="RNA_pol_Rpb2_7"/>
    <property type="match status" value="1"/>
</dbReference>
<dbReference type="SUPFAM" id="SSF64484">
    <property type="entry name" value="beta and beta-prime subunits of DNA dependent RNA-polymerase"/>
    <property type="match status" value="1"/>
</dbReference>
<dbReference type="PROSITE" id="PS01166">
    <property type="entry name" value="RNA_POL_BETA"/>
    <property type="match status" value="1"/>
</dbReference>
<reference key="1">
    <citation type="journal article" date="2005" name="PLoS Biol.">
        <title>The genome sequence of Rickettsia felis identifies the first putative conjugative plasmid in an obligate intracellular parasite.</title>
        <authorList>
            <person name="Ogata H."/>
            <person name="Renesto P."/>
            <person name="Audic S."/>
            <person name="Robert C."/>
            <person name="Blanc G."/>
            <person name="Fournier P.-E."/>
            <person name="Parinello H."/>
            <person name="Claverie J.-M."/>
            <person name="Raoult D."/>
        </authorList>
    </citation>
    <scope>NUCLEOTIDE SEQUENCE [LARGE SCALE GENOMIC DNA]</scope>
    <source>
        <strain>ATCC VR-1525 / URRWXCal2</strain>
    </source>
</reference>
<sequence length="1373" mass="154332">MVSLRDNIEAQPLSHNRRIRKNFGHINLVADIPNLIEIQKNSYEKNFLQLNIKDSERKNKGLQSILNSIFPISDSSNIANLEFVKYEFDTPKYDVEECSQRSLSYAAPLKVTLRLSIWDIDEDTGTREIKGIKEQEVYMGDIPLMTKNGTFIINGTERVVVSQMHRSPGVFFYHDEGKVHSSGKLLYSARVIPYRGSWLDLEFDAKDVIYFRIDRKRKLYATTLLRAIGMSTEEIIKFYYNSVTYKLVKNKGWAVKFIPQHITAHRLTSDLVDADTGNVLLKAGQKITPRLAKKYFGEGLNNILVAHETLIGKYLSEDLRDPASDEVLAKIGEMITSDMLNVINDLKIKNVNVLVINPQSGPYIRNTLFADKNQDREAALCDIFRVLRPGEPANIEAAENLFYNLFFDAERYDLSEVGRIKMNSRLELNISEEVTVLTIDDIKNIVRVLVELKDGKGIIDDIDHLGNRRVRSVGELIENQFRIGLVRMEKSVIERMSAGDVDTVMPHDLVNSKILVSVVKEFFSTSQLSQFMDQTNPLSEITHKRRLSALGPGGLSRDRAGFEVRDVHPTHYGRICPIETPEGQNIGLINSMATYARINKHGFIESPYRRVKDRHVTDEVVYLSAIEEGKYKIGQANSKVDKDGKLQGEFINCRVEGGNFVMVEPQEVDFIDVTPMQVVSVAASLIPFLENDDANRALMGSNMQRQAVPLIKTDAPFVGTGVEGVVAKDSGASVLALHDGIVEQVDSNRIVIRTLEQKIDGSPSVDIYNLLKFQKSNHNTCINQKPLVKVGHYVKKNDIIADGPSTDNGEIALGRNVLVAFLPWNGYNFEDSILISERIVKEDVFTSIHIEEFEVIARDTRLGPEEITRDIPNVSEEALRHLDEVGIIYVGAEVKAGDILVGKVTPKSESPITPEEKLLRAIFGEKAFDVKDSSLHVPSGVSGTVVEVRVFSRRGVEKDQRAIAIEKQQIEKLAKDRDDELEIIEHFVFSWLEKLLIGQVIVNGPKQVKAGQTITSEMLKGLSKGQFWQLTVEDANVMNEIEQIKVHYDEKKDALDKRFATKVEKLQSGDDLPQGALKVVKVFIATKHKLQPGDKMAGRHGNKGVISRIVPEEDMPFLEDGTVVDIVLNPLGLPSRMNIGQILETHLGWASINLAKKISTLVKEYKNKHIGIEQIKKFLLELYGENINYILERSEEEIISFCNKVSKGVHFATPVFDGAKVQDVKDMLKLAGQDPSGQVKLIDGRTGEYFDRLVTVGQKYLLKLHHLVDNKIHSRSIGPYSLVTQQPLGGKSHFGGQRFGEMECWALQAYGAAYTLQEMLTVKSDDVNGRIKTYDSIVRGENNFESGIPESFNVMIKEFRSLCLNVKLEVTSS</sequence>
<evidence type="ECO:0000255" key="1">
    <source>
        <dbReference type="HAMAP-Rule" id="MF_01321"/>
    </source>
</evidence>